<geneLocation type="chloroplast"/>
<protein>
    <recommendedName>
        <fullName evidence="1">Ribulose bisphosphate carboxylase large chain</fullName>
        <shortName evidence="1">RuBisCO large subunit</shortName>
        <ecNumber evidence="1">4.1.1.39</ecNumber>
    </recommendedName>
</protein>
<proteinExistence type="inferred from homology"/>
<reference key="1">
    <citation type="journal article" date="1998" name="Evolution">
        <title>Differentiation of mitochondrial DNA polymorphisms in populations of five Japanese Abies species.</title>
        <authorList>
            <person name="Tsumura Y."/>
            <person name="Suyama Y."/>
        </authorList>
        <dbReference type="AGRICOLA" id="IND21806043"/>
    </citation>
    <scope>NUCLEOTIDE SEQUENCE [GENOMIC DNA]</scope>
</reference>
<keyword id="KW-0113">Calvin cycle</keyword>
<keyword id="KW-0120">Carbon dioxide fixation</keyword>
<keyword id="KW-0150">Chloroplast</keyword>
<keyword id="KW-1015">Disulfide bond</keyword>
<keyword id="KW-0456">Lyase</keyword>
<keyword id="KW-0460">Magnesium</keyword>
<keyword id="KW-0479">Metal-binding</keyword>
<keyword id="KW-0488">Methylation</keyword>
<keyword id="KW-0503">Monooxygenase</keyword>
<keyword id="KW-0560">Oxidoreductase</keyword>
<keyword id="KW-0601">Photorespiration</keyword>
<keyword id="KW-0602">Photosynthesis</keyword>
<keyword id="KW-0934">Plastid</keyword>
<accession>O78262</accession>
<gene>
    <name evidence="1" type="primary">rbcL</name>
</gene>
<organism>
    <name type="scientific">Abies sachalinensis</name>
    <name type="common">Sakhalin fir</name>
    <name type="synonym">Abies veitchii var. sachalinensis</name>
    <dbReference type="NCBI Taxonomy" id="78264"/>
    <lineage>
        <taxon>Eukaryota</taxon>
        <taxon>Viridiplantae</taxon>
        <taxon>Streptophyta</taxon>
        <taxon>Embryophyta</taxon>
        <taxon>Tracheophyta</taxon>
        <taxon>Spermatophyta</taxon>
        <taxon>Pinopsida</taxon>
        <taxon>Pinidae</taxon>
        <taxon>Conifers I</taxon>
        <taxon>Pinales</taxon>
        <taxon>Pinaceae</taxon>
        <taxon>Abies</taxon>
    </lineage>
</organism>
<feature type="chain" id="PRO_0000062334" description="Ribulose bisphosphate carboxylase large chain">
    <location>
        <begin position="1" status="less than"/>
        <end position="443" status="greater than"/>
    </location>
</feature>
<feature type="active site" description="Proton acceptor" evidence="1">
    <location>
        <position position="168"/>
    </location>
</feature>
<feature type="active site" description="Proton acceptor" evidence="1">
    <location>
        <position position="287"/>
    </location>
</feature>
<feature type="binding site" description="in homodimeric partner" evidence="1">
    <location>
        <position position="116"/>
    </location>
    <ligand>
        <name>substrate</name>
    </ligand>
</feature>
<feature type="binding site" evidence="1">
    <location>
        <position position="166"/>
    </location>
    <ligand>
        <name>substrate</name>
    </ligand>
</feature>
<feature type="binding site" evidence="1">
    <location>
        <position position="170"/>
    </location>
    <ligand>
        <name>substrate</name>
    </ligand>
</feature>
<feature type="binding site" description="via carbamate group" evidence="1">
    <location>
        <position position="194"/>
    </location>
    <ligand>
        <name>Mg(2+)</name>
        <dbReference type="ChEBI" id="CHEBI:18420"/>
    </ligand>
</feature>
<feature type="binding site" evidence="1">
    <location>
        <position position="196"/>
    </location>
    <ligand>
        <name>Mg(2+)</name>
        <dbReference type="ChEBI" id="CHEBI:18420"/>
    </ligand>
</feature>
<feature type="binding site" evidence="1">
    <location>
        <position position="197"/>
    </location>
    <ligand>
        <name>Mg(2+)</name>
        <dbReference type="ChEBI" id="CHEBI:18420"/>
    </ligand>
</feature>
<feature type="binding site" evidence="1">
    <location>
        <position position="288"/>
    </location>
    <ligand>
        <name>substrate</name>
    </ligand>
</feature>
<feature type="binding site" evidence="1">
    <location>
        <position position="320"/>
    </location>
    <ligand>
        <name>substrate</name>
    </ligand>
</feature>
<feature type="binding site" evidence="1">
    <location>
        <position position="372"/>
    </location>
    <ligand>
        <name>substrate</name>
    </ligand>
</feature>
<feature type="site" description="Transition state stabilizer" evidence="1">
    <location>
        <position position="327"/>
    </location>
</feature>
<feature type="modified residue" description="N6,N6,N6-trimethyllysine" evidence="1">
    <location>
        <position position="7"/>
    </location>
</feature>
<feature type="modified residue" description="N6-carboxylysine" evidence="1">
    <location>
        <position position="194"/>
    </location>
</feature>
<feature type="disulfide bond" description="Interchain; in linked form" evidence="1">
    <location>
        <position position="240"/>
    </location>
</feature>
<feature type="non-terminal residue">
    <location>
        <position position="1"/>
    </location>
</feature>
<feature type="non-terminal residue">
    <location>
        <position position="443"/>
    </location>
</feature>
<comment type="function">
    <text evidence="1">RuBisCO catalyzes two reactions: the carboxylation of D-ribulose 1,5-bisphosphate, the primary event in carbon dioxide fixation, as well as the oxidative fragmentation of the pentose substrate in the photorespiration process. Both reactions occur simultaneously and in competition at the same active site.</text>
</comment>
<comment type="catalytic activity">
    <reaction evidence="1">
        <text>2 (2R)-3-phosphoglycerate + 2 H(+) = D-ribulose 1,5-bisphosphate + CO2 + H2O</text>
        <dbReference type="Rhea" id="RHEA:23124"/>
        <dbReference type="ChEBI" id="CHEBI:15377"/>
        <dbReference type="ChEBI" id="CHEBI:15378"/>
        <dbReference type="ChEBI" id="CHEBI:16526"/>
        <dbReference type="ChEBI" id="CHEBI:57870"/>
        <dbReference type="ChEBI" id="CHEBI:58272"/>
        <dbReference type="EC" id="4.1.1.39"/>
    </reaction>
</comment>
<comment type="catalytic activity">
    <reaction evidence="1">
        <text>D-ribulose 1,5-bisphosphate + O2 = 2-phosphoglycolate + (2R)-3-phosphoglycerate + 2 H(+)</text>
        <dbReference type="Rhea" id="RHEA:36631"/>
        <dbReference type="ChEBI" id="CHEBI:15378"/>
        <dbReference type="ChEBI" id="CHEBI:15379"/>
        <dbReference type="ChEBI" id="CHEBI:57870"/>
        <dbReference type="ChEBI" id="CHEBI:58033"/>
        <dbReference type="ChEBI" id="CHEBI:58272"/>
    </reaction>
</comment>
<comment type="cofactor">
    <cofactor evidence="1">
        <name>Mg(2+)</name>
        <dbReference type="ChEBI" id="CHEBI:18420"/>
    </cofactor>
    <text evidence="1">Binds 1 Mg(2+) ion per subunit.</text>
</comment>
<comment type="subunit">
    <text evidence="1">Heterohexadecamer of 8 large chains and 8 small chains; disulfide-linked. The disulfide link is formed within the large subunit homodimers.</text>
</comment>
<comment type="subcellular location">
    <subcellularLocation>
        <location>Plastid</location>
        <location>Chloroplast</location>
    </subcellularLocation>
</comment>
<comment type="PTM">
    <text evidence="1">The disulfide bond which can form in the large chain dimeric partners within the hexadecamer appears to be associated with oxidative stress and protein turnover.</text>
</comment>
<comment type="miscellaneous">
    <text evidence="1">The basic functional RuBisCO is composed of a large chain homodimer in a 'head-to-tail' conformation. In form I RuBisCO this homodimer is arranged in a barrel-like tetramer with the small subunits forming a tetrameric 'cap' on each end of the 'barrel'.</text>
</comment>
<comment type="similarity">
    <text evidence="1">Belongs to the RuBisCO large chain family. Type I subfamily.</text>
</comment>
<evidence type="ECO:0000255" key="1">
    <source>
        <dbReference type="HAMAP-Rule" id="MF_01338"/>
    </source>
</evidence>
<sequence length="443" mass="48906">KASVGFKAGVKDYRLTYYTPEYQTKDTDILAAFRVTPQPGVPPEEAGAAVAAESSTGTWTTVWTDGLTSLDRYKGRCYDIEPVAGEESQFIAYVAYPLDLFEEGSVTNLFTSIVGNVFGFKALRALRLEDLRIPPAYSKTFQGPPHGIQVERDKLNKYGRPLLGCTIKPKLGLSAKNYGRAVYECLRGGLDFTKDDENVNSQPFMRWRDRFVFCAEAINKAQAETGEIKGHYLNATAGTCEEMMKRAIFARELGVPIVMHDYLTGGFTANTSLAHYCRDNGLLLHIHRAMHAVIDRQRNHGMHFRVLAKALRMSGGDHVHAGTVVGKLEGERDVTLGFVDLLRDDFIEKDRSRGIYFTQDWVSMPGVLPVASGGIHVWHMPALTEIFGDDSVLQFGGGTLGHPWGNAPGAVANRVAVEACVQARNEGRDLAREGNEVIREACK</sequence>
<name>RBL_ABISA</name>
<dbReference type="EC" id="4.1.1.39" evidence="1"/>
<dbReference type="EMBL" id="AB015651">
    <property type="protein sequence ID" value="BAA31208.1"/>
    <property type="molecule type" value="Genomic_DNA"/>
</dbReference>
<dbReference type="SMR" id="O78262"/>
<dbReference type="GO" id="GO:0009507">
    <property type="term" value="C:chloroplast"/>
    <property type="evidence" value="ECO:0007669"/>
    <property type="project" value="UniProtKB-SubCell"/>
</dbReference>
<dbReference type="GO" id="GO:0000287">
    <property type="term" value="F:magnesium ion binding"/>
    <property type="evidence" value="ECO:0007669"/>
    <property type="project" value="InterPro"/>
</dbReference>
<dbReference type="GO" id="GO:0004497">
    <property type="term" value="F:monooxygenase activity"/>
    <property type="evidence" value="ECO:0007669"/>
    <property type="project" value="UniProtKB-KW"/>
</dbReference>
<dbReference type="GO" id="GO:0016984">
    <property type="term" value="F:ribulose-bisphosphate carboxylase activity"/>
    <property type="evidence" value="ECO:0007669"/>
    <property type="project" value="UniProtKB-EC"/>
</dbReference>
<dbReference type="GO" id="GO:0009853">
    <property type="term" value="P:photorespiration"/>
    <property type="evidence" value="ECO:0007669"/>
    <property type="project" value="UniProtKB-KW"/>
</dbReference>
<dbReference type="GO" id="GO:0019253">
    <property type="term" value="P:reductive pentose-phosphate cycle"/>
    <property type="evidence" value="ECO:0007669"/>
    <property type="project" value="UniProtKB-KW"/>
</dbReference>
<dbReference type="CDD" id="cd08212">
    <property type="entry name" value="RuBisCO_large_I"/>
    <property type="match status" value="1"/>
</dbReference>
<dbReference type="FunFam" id="3.20.20.110:FF:000003">
    <property type="entry name" value="Ribulose bisphosphate carboxylase large chain"/>
    <property type="match status" value="1"/>
</dbReference>
<dbReference type="FunFam" id="3.30.70.150:FF:000001">
    <property type="entry name" value="Ribulose bisphosphate carboxylase large chain"/>
    <property type="match status" value="1"/>
</dbReference>
<dbReference type="Gene3D" id="3.20.20.110">
    <property type="entry name" value="Ribulose bisphosphate carboxylase, large subunit, C-terminal domain"/>
    <property type="match status" value="1"/>
</dbReference>
<dbReference type="Gene3D" id="3.30.70.150">
    <property type="entry name" value="RuBisCO large subunit, N-terminal domain"/>
    <property type="match status" value="1"/>
</dbReference>
<dbReference type="HAMAP" id="MF_01338">
    <property type="entry name" value="RuBisCO_L_type1"/>
    <property type="match status" value="1"/>
</dbReference>
<dbReference type="InterPro" id="IPR033966">
    <property type="entry name" value="RuBisCO"/>
</dbReference>
<dbReference type="InterPro" id="IPR020878">
    <property type="entry name" value="RuBisCo_large_chain_AS"/>
</dbReference>
<dbReference type="InterPro" id="IPR000685">
    <property type="entry name" value="RuBisCO_lsu_C"/>
</dbReference>
<dbReference type="InterPro" id="IPR036376">
    <property type="entry name" value="RuBisCO_lsu_C_sf"/>
</dbReference>
<dbReference type="InterPro" id="IPR017443">
    <property type="entry name" value="RuBisCO_lsu_fd_N"/>
</dbReference>
<dbReference type="InterPro" id="IPR036422">
    <property type="entry name" value="RuBisCO_lsu_N_sf"/>
</dbReference>
<dbReference type="InterPro" id="IPR020888">
    <property type="entry name" value="RuBisCO_lsuI"/>
</dbReference>
<dbReference type="NCBIfam" id="NF003252">
    <property type="entry name" value="PRK04208.1"/>
    <property type="match status" value="1"/>
</dbReference>
<dbReference type="PANTHER" id="PTHR42704">
    <property type="entry name" value="RIBULOSE BISPHOSPHATE CARBOXYLASE"/>
    <property type="match status" value="1"/>
</dbReference>
<dbReference type="PANTHER" id="PTHR42704:SF15">
    <property type="entry name" value="RIBULOSE BISPHOSPHATE CARBOXYLASE LARGE CHAIN"/>
    <property type="match status" value="1"/>
</dbReference>
<dbReference type="Pfam" id="PF00016">
    <property type="entry name" value="RuBisCO_large"/>
    <property type="match status" value="1"/>
</dbReference>
<dbReference type="Pfam" id="PF02788">
    <property type="entry name" value="RuBisCO_large_N"/>
    <property type="match status" value="1"/>
</dbReference>
<dbReference type="SFLD" id="SFLDG01052">
    <property type="entry name" value="RuBisCO"/>
    <property type="match status" value="1"/>
</dbReference>
<dbReference type="SFLD" id="SFLDS00014">
    <property type="entry name" value="RuBisCO"/>
    <property type="match status" value="1"/>
</dbReference>
<dbReference type="SFLD" id="SFLDG00301">
    <property type="entry name" value="RuBisCO-like_proteins"/>
    <property type="match status" value="1"/>
</dbReference>
<dbReference type="SUPFAM" id="SSF51649">
    <property type="entry name" value="RuBisCo, C-terminal domain"/>
    <property type="match status" value="1"/>
</dbReference>
<dbReference type="SUPFAM" id="SSF54966">
    <property type="entry name" value="RuBisCO, large subunit, small (N-terminal) domain"/>
    <property type="match status" value="1"/>
</dbReference>
<dbReference type="PROSITE" id="PS00157">
    <property type="entry name" value="RUBISCO_LARGE"/>
    <property type="match status" value="1"/>
</dbReference>